<dbReference type="EC" id="1.1.1.94" evidence="1"/>
<dbReference type="EMBL" id="CP001010">
    <property type="protein sequence ID" value="ACB44723.1"/>
    <property type="molecule type" value="Genomic_DNA"/>
</dbReference>
<dbReference type="SMR" id="B1XS88"/>
<dbReference type="STRING" id="452638.Pnec_1649"/>
<dbReference type="KEGG" id="pne:Pnec_1649"/>
<dbReference type="eggNOG" id="COG0240">
    <property type="taxonomic scope" value="Bacteria"/>
</dbReference>
<dbReference type="HOGENOM" id="CLU_033449_0_2_4"/>
<dbReference type="OrthoDB" id="9812273at2"/>
<dbReference type="UniPathway" id="UPA00940"/>
<dbReference type="GO" id="GO:0005829">
    <property type="term" value="C:cytosol"/>
    <property type="evidence" value="ECO:0007669"/>
    <property type="project" value="TreeGrafter"/>
</dbReference>
<dbReference type="GO" id="GO:0047952">
    <property type="term" value="F:glycerol-3-phosphate dehydrogenase [NAD(P)+] activity"/>
    <property type="evidence" value="ECO:0007669"/>
    <property type="project" value="UniProtKB-UniRule"/>
</dbReference>
<dbReference type="GO" id="GO:0051287">
    <property type="term" value="F:NAD binding"/>
    <property type="evidence" value="ECO:0007669"/>
    <property type="project" value="InterPro"/>
</dbReference>
<dbReference type="GO" id="GO:0005975">
    <property type="term" value="P:carbohydrate metabolic process"/>
    <property type="evidence" value="ECO:0007669"/>
    <property type="project" value="InterPro"/>
</dbReference>
<dbReference type="GO" id="GO:0046167">
    <property type="term" value="P:glycerol-3-phosphate biosynthetic process"/>
    <property type="evidence" value="ECO:0007669"/>
    <property type="project" value="UniProtKB-UniRule"/>
</dbReference>
<dbReference type="GO" id="GO:0046168">
    <property type="term" value="P:glycerol-3-phosphate catabolic process"/>
    <property type="evidence" value="ECO:0007669"/>
    <property type="project" value="InterPro"/>
</dbReference>
<dbReference type="GO" id="GO:0006650">
    <property type="term" value="P:glycerophospholipid metabolic process"/>
    <property type="evidence" value="ECO:0007669"/>
    <property type="project" value="UniProtKB-UniRule"/>
</dbReference>
<dbReference type="GO" id="GO:0008654">
    <property type="term" value="P:phospholipid biosynthetic process"/>
    <property type="evidence" value="ECO:0007669"/>
    <property type="project" value="UniProtKB-KW"/>
</dbReference>
<dbReference type="FunFam" id="1.10.1040.10:FF:000001">
    <property type="entry name" value="Glycerol-3-phosphate dehydrogenase [NAD(P)+]"/>
    <property type="match status" value="1"/>
</dbReference>
<dbReference type="FunFam" id="3.40.50.720:FF:000019">
    <property type="entry name" value="Glycerol-3-phosphate dehydrogenase [NAD(P)+]"/>
    <property type="match status" value="1"/>
</dbReference>
<dbReference type="Gene3D" id="1.10.1040.10">
    <property type="entry name" value="N-(1-d-carboxylethyl)-l-norvaline Dehydrogenase, domain 2"/>
    <property type="match status" value="1"/>
</dbReference>
<dbReference type="Gene3D" id="3.40.50.720">
    <property type="entry name" value="NAD(P)-binding Rossmann-like Domain"/>
    <property type="match status" value="1"/>
</dbReference>
<dbReference type="HAMAP" id="MF_00394">
    <property type="entry name" value="NAD_Glyc3P_dehydrog"/>
    <property type="match status" value="1"/>
</dbReference>
<dbReference type="InterPro" id="IPR008927">
    <property type="entry name" value="6-PGluconate_DH-like_C_sf"/>
</dbReference>
<dbReference type="InterPro" id="IPR013328">
    <property type="entry name" value="6PGD_dom2"/>
</dbReference>
<dbReference type="InterPro" id="IPR006168">
    <property type="entry name" value="G3P_DH_NAD-dep"/>
</dbReference>
<dbReference type="InterPro" id="IPR006109">
    <property type="entry name" value="G3P_DH_NAD-dep_C"/>
</dbReference>
<dbReference type="InterPro" id="IPR011128">
    <property type="entry name" value="G3P_DH_NAD-dep_N"/>
</dbReference>
<dbReference type="InterPro" id="IPR036291">
    <property type="entry name" value="NAD(P)-bd_dom_sf"/>
</dbReference>
<dbReference type="NCBIfam" id="NF000940">
    <property type="entry name" value="PRK00094.1-2"/>
    <property type="match status" value="1"/>
</dbReference>
<dbReference type="NCBIfam" id="NF000942">
    <property type="entry name" value="PRK00094.1-4"/>
    <property type="match status" value="1"/>
</dbReference>
<dbReference type="PANTHER" id="PTHR11728">
    <property type="entry name" value="GLYCEROL-3-PHOSPHATE DEHYDROGENASE"/>
    <property type="match status" value="1"/>
</dbReference>
<dbReference type="PANTHER" id="PTHR11728:SF1">
    <property type="entry name" value="GLYCEROL-3-PHOSPHATE DEHYDROGENASE [NAD(+)] 2, CHLOROPLASTIC"/>
    <property type="match status" value="1"/>
</dbReference>
<dbReference type="Pfam" id="PF07479">
    <property type="entry name" value="NAD_Gly3P_dh_C"/>
    <property type="match status" value="1"/>
</dbReference>
<dbReference type="Pfam" id="PF01210">
    <property type="entry name" value="NAD_Gly3P_dh_N"/>
    <property type="match status" value="1"/>
</dbReference>
<dbReference type="PIRSF" id="PIRSF000114">
    <property type="entry name" value="Glycerol-3-P_dh"/>
    <property type="match status" value="1"/>
</dbReference>
<dbReference type="PRINTS" id="PR00077">
    <property type="entry name" value="GPDHDRGNASE"/>
</dbReference>
<dbReference type="SUPFAM" id="SSF48179">
    <property type="entry name" value="6-phosphogluconate dehydrogenase C-terminal domain-like"/>
    <property type="match status" value="1"/>
</dbReference>
<dbReference type="SUPFAM" id="SSF51735">
    <property type="entry name" value="NAD(P)-binding Rossmann-fold domains"/>
    <property type="match status" value="1"/>
</dbReference>
<dbReference type="PROSITE" id="PS00957">
    <property type="entry name" value="NAD_G3PDH"/>
    <property type="match status" value="1"/>
</dbReference>
<protein>
    <recommendedName>
        <fullName evidence="1">Glycerol-3-phosphate dehydrogenase [NAD(P)+]</fullName>
        <ecNumber evidence="1">1.1.1.94</ecNumber>
    </recommendedName>
    <alternativeName>
        <fullName evidence="1">NAD(P)(+)-dependent glycerol-3-phosphate dehydrogenase</fullName>
    </alternativeName>
    <alternativeName>
        <fullName evidence="1">NAD(P)H-dependent dihydroxyacetone-phosphate reductase</fullName>
    </alternativeName>
</protein>
<name>GPDA_POLNS</name>
<comment type="function">
    <text evidence="1">Catalyzes the reduction of the glycolytic intermediate dihydroxyacetone phosphate (DHAP) to sn-glycerol 3-phosphate (G3P), the key precursor for phospholipid synthesis.</text>
</comment>
<comment type="catalytic activity">
    <reaction evidence="1">
        <text>sn-glycerol 3-phosphate + NAD(+) = dihydroxyacetone phosphate + NADH + H(+)</text>
        <dbReference type="Rhea" id="RHEA:11092"/>
        <dbReference type="ChEBI" id="CHEBI:15378"/>
        <dbReference type="ChEBI" id="CHEBI:57540"/>
        <dbReference type="ChEBI" id="CHEBI:57597"/>
        <dbReference type="ChEBI" id="CHEBI:57642"/>
        <dbReference type="ChEBI" id="CHEBI:57945"/>
        <dbReference type="EC" id="1.1.1.94"/>
    </reaction>
    <physiologicalReaction direction="right-to-left" evidence="1">
        <dbReference type="Rhea" id="RHEA:11094"/>
    </physiologicalReaction>
</comment>
<comment type="catalytic activity">
    <reaction evidence="1">
        <text>sn-glycerol 3-phosphate + NADP(+) = dihydroxyacetone phosphate + NADPH + H(+)</text>
        <dbReference type="Rhea" id="RHEA:11096"/>
        <dbReference type="ChEBI" id="CHEBI:15378"/>
        <dbReference type="ChEBI" id="CHEBI:57597"/>
        <dbReference type="ChEBI" id="CHEBI:57642"/>
        <dbReference type="ChEBI" id="CHEBI:57783"/>
        <dbReference type="ChEBI" id="CHEBI:58349"/>
        <dbReference type="EC" id="1.1.1.94"/>
    </reaction>
    <physiologicalReaction direction="right-to-left" evidence="1">
        <dbReference type="Rhea" id="RHEA:11098"/>
    </physiologicalReaction>
</comment>
<comment type="pathway">
    <text evidence="1">Membrane lipid metabolism; glycerophospholipid metabolism.</text>
</comment>
<comment type="subcellular location">
    <subcellularLocation>
        <location evidence="1">Cytoplasm</location>
    </subcellularLocation>
</comment>
<comment type="similarity">
    <text evidence="1">Belongs to the NAD-dependent glycerol-3-phosphate dehydrogenase family.</text>
</comment>
<evidence type="ECO:0000255" key="1">
    <source>
        <dbReference type="HAMAP-Rule" id="MF_00394"/>
    </source>
</evidence>
<reference key="1">
    <citation type="journal article" date="2013" name="Proc. Natl. Acad. Sci. U.S.A.">
        <title>Polynucleobacter necessarius, a model for genome reduction in both free-living and symbiotic bacteria.</title>
        <authorList>
            <person name="Boscaro V."/>
            <person name="Felletti M."/>
            <person name="Vannini C."/>
            <person name="Ackerman M.S."/>
            <person name="Chain P.S."/>
            <person name="Malfatti S."/>
            <person name="Vergez L.M."/>
            <person name="Shin M."/>
            <person name="Doak T.G."/>
            <person name="Lynch M."/>
            <person name="Petroni G."/>
        </authorList>
    </citation>
    <scope>NUCLEOTIDE SEQUENCE [LARGE SCALE GENOMIC DNA]</scope>
    <source>
        <strain>STIR1</strain>
    </source>
</reference>
<organism>
    <name type="scientific">Polynucleobacter necessarius subsp. necessarius (strain STIR1)</name>
    <dbReference type="NCBI Taxonomy" id="452638"/>
    <lineage>
        <taxon>Bacteria</taxon>
        <taxon>Pseudomonadati</taxon>
        <taxon>Pseudomonadota</taxon>
        <taxon>Betaproteobacteria</taxon>
        <taxon>Burkholderiales</taxon>
        <taxon>Burkholderiaceae</taxon>
        <taxon>Polynucleobacter</taxon>
    </lineage>
</organism>
<accession>B1XS88</accession>
<keyword id="KW-0963">Cytoplasm</keyword>
<keyword id="KW-0444">Lipid biosynthesis</keyword>
<keyword id="KW-0443">Lipid metabolism</keyword>
<keyword id="KW-0520">NAD</keyword>
<keyword id="KW-0521">NADP</keyword>
<keyword id="KW-0547">Nucleotide-binding</keyword>
<keyword id="KW-0560">Oxidoreductase</keyword>
<keyword id="KW-0594">Phospholipid biosynthesis</keyword>
<keyword id="KW-1208">Phospholipid metabolism</keyword>
<feature type="chain" id="PRO_1000123171" description="Glycerol-3-phosphate dehydrogenase [NAD(P)+]">
    <location>
        <begin position="1"/>
        <end position="340"/>
    </location>
</feature>
<feature type="active site" description="Proton acceptor" evidence="1">
    <location>
        <position position="199"/>
    </location>
</feature>
<feature type="binding site" evidence="1">
    <location>
        <position position="11"/>
    </location>
    <ligand>
        <name>NADPH</name>
        <dbReference type="ChEBI" id="CHEBI:57783"/>
    </ligand>
</feature>
<feature type="binding site" evidence="1">
    <location>
        <position position="33"/>
    </location>
    <ligand>
        <name>NADPH</name>
        <dbReference type="ChEBI" id="CHEBI:57783"/>
    </ligand>
</feature>
<feature type="binding site" evidence="1">
    <location>
        <position position="110"/>
    </location>
    <ligand>
        <name>NADPH</name>
        <dbReference type="ChEBI" id="CHEBI:57783"/>
    </ligand>
</feature>
<feature type="binding site" evidence="1">
    <location>
        <position position="110"/>
    </location>
    <ligand>
        <name>sn-glycerol 3-phosphate</name>
        <dbReference type="ChEBI" id="CHEBI:57597"/>
    </ligand>
</feature>
<feature type="binding site" evidence="1">
    <location>
        <position position="144"/>
    </location>
    <ligand>
        <name>sn-glycerol 3-phosphate</name>
        <dbReference type="ChEBI" id="CHEBI:57597"/>
    </ligand>
</feature>
<feature type="binding site" evidence="1">
    <location>
        <position position="146"/>
    </location>
    <ligand>
        <name>sn-glycerol 3-phosphate</name>
        <dbReference type="ChEBI" id="CHEBI:57597"/>
    </ligand>
</feature>
<feature type="binding site" evidence="1">
    <location>
        <position position="148"/>
    </location>
    <ligand>
        <name>NADPH</name>
        <dbReference type="ChEBI" id="CHEBI:57783"/>
    </ligand>
</feature>
<feature type="binding site" evidence="1">
    <location>
        <position position="199"/>
    </location>
    <ligand>
        <name>sn-glycerol 3-phosphate</name>
        <dbReference type="ChEBI" id="CHEBI:57597"/>
    </ligand>
</feature>
<feature type="binding site" evidence="1">
    <location>
        <position position="252"/>
    </location>
    <ligand>
        <name>sn-glycerol 3-phosphate</name>
        <dbReference type="ChEBI" id="CHEBI:57597"/>
    </ligand>
</feature>
<feature type="binding site" evidence="1">
    <location>
        <position position="262"/>
    </location>
    <ligand>
        <name>sn-glycerol 3-phosphate</name>
        <dbReference type="ChEBI" id="CHEBI:57597"/>
    </ligand>
</feature>
<feature type="binding site" evidence="1">
    <location>
        <position position="263"/>
    </location>
    <ligand>
        <name>NADPH</name>
        <dbReference type="ChEBI" id="CHEBI:57783"/>
    </ligand>
</feature>
<feature type="binding site" evidence="1">
    <location>
        <position position="263"/>
    </location>
    <ligand>
        <name>sn-glycerol 3-phosphate</name>
        <dbReference type="ChEBI" id="CHEBI:57597"/>
    </ligand>
</feature>
<feature type="binding site" evidence="1">
    <location>
        <position position="264"/>
    </location>
    <ligand>
        <name>sn-glycerol 3-phosphate</name>
        <dbReference type="ChEBI" id="CHEBI:57597"/>
    </ligand>
</feature>
<feature type="binding site" evidence="1">
    <location>
        <position position="287"/>
    </location>
    <ligand>
        <name>NADPH</name>
        <dbReference type="ChEBI" id="CHEBI:57783"/>
    </ligand>
</feature>
<feature type="binding site" evidence="1">
    <location>
        <position position="289"/>
    </location>
    <ligand>
        <name>NADPH</name>
        <dbReference type="ChEBI" id="CHEBI:57783"/>
    </ligand>
</feature>
<proteinExistence type="inferred from homology"/>
<gene>
    <name evidence="1" type="primary">gpsA</name>
    <name type="ordered locus">Pnec_1649</name>
</gene>
<sequence>MKVTLLGAGAWGMAMAAQATRHLQEGDVCLWSRSKEQLLDIQESGENRAYLSGIKLPEGLKLEGDFSAAVKRLSIDDLLVIATPMSGLSETIAQVLRVAEHPLNIIWLCKGLEPNTALLPHQVVERESKIHSHGITHSYGALSGPSFAREVGVGMPCALTVASKSPKLCEVVQAAFHHGNMRVYSSDDLIGVELGGAIKNVLAIAAGIGDGLDLGLNARAAVLTRGLAEMMRLVKAAGGKSETCMGLTGVGDLILTATGDLSRNRRVGLELAAGKSLPEILASLGHVAEGVLCAQAVGDLAKRLGIEMPITAMMDEVLSGKLKPHDAVKKLMGRDPKIES</sequence>